<proteinExistence type="evidence at transcript level"/>
<comment type="function">
    <text>Cytochromes P450 are a group of heme-thiolate monooxygenases. In liver microsomes, this enzyme is involved in an NADPH-dependent electron transport pathway. It oxidizes a variety of structurally unrelated compounds, including steroids, fatty acids, and xenobiotics.</text>
</comment>
<comment type="catalytic activity">
    <reaction>
        <text>an organic molecule + reduced [NADPH--hemoprotein reductase] + O2 = an alcohol + oxidized [NADPH--hemoprotein reductase] + H2O + H(+)</text>
        <dbReference type="Rhea" id="RHEA:17149"/>
        <dbReference type="Rhea" id="RHEA-COMP:11964"/>
        <dbReference type="Rhea" id="RHEA-COMP:11965"/>
        <dbReference type="ChEBI" id="CHEBI:15377"/>
        <dbReference type="ChEBI" id="CHEBI:15378"/>
        <dbReference type="ChEBI" id="CHEBI:15379"/>
        <dbReference type="ChEBI" id="CHEBI:30879"/>
        <dbReference type="ChEBI" id="CHEBI:57618"/>
        <dbReference type="ChEBI" id="CHEBI:58210"/>
        <dbReference type="ChEBI" id="CHEBI:142491"/>
        <dbReference type="EC" id="1.14.14.1"/>
    </reaction>
</comment>
<comment type="cofactor">
    <cofactor evidence="1">
        <name>heme</name>
        <dbReference type="ChEBI" id="CHEBI:30413"/>
    </cofactor>
</comment>
<comment type="subcellular location">
    <subcellularLocation>
        <location>Endoplasmic reticulum membrane</location>
        <topology>Peripheral membrane protein</topology>
    </subcellularLocation>
    <subcellularLocation>
        <location>Microsome membrane</location>
        <topology>Peripheral membrane protein</topology>
    </subcellularLocation>
</comment>
<comment type="tissue specificity">
    <text>Liver. Not found in the lung, kidney and prostate.</text>
</comment>
<comment type="induction">
    <text>Constitutively expressed.</text>
</comment>
<comment type="similarity">
    <text evidence="2">Belongs to the cytochrome P450 family.</text>
</comment>
<name>CP2B3_RAT</name>
<accession>P13107</accession>
<accession>A1L121</accession>
<accession>Q3B8R5</accession>
<accession>Q64585</accession>
<feature type="chain" id="PRO_0000051680" description="Cytochrome P450 2B3">
    <location>
        <begin position="1"/>
        <end position="491"/>
    </location>
</feature>
<feature type="binding site" description="axial binding residue">
    <location>
        <position position="436"/>
    </location>
    <ligand>
        <name>heme</name>
        <dbReference type="ChEBI" id="CHEBI:30413"/>
    </ligand>
    <ligandPart>
        <name>Fe</name>
        <dbReference type="ChEBI" id="CHEBI:18248"/>
    </ligandPart>
</feature>
<feature type="sequence conflict" description="In Ref. 3; AAA41048." evidence="2" ref="3">
    <original>P</original>
    <variation>Q</variation>
    <location>
        <position position="364"/>
    </location>
</feature>
<sequence>MDTSVLLLLAVLLSFLLFLVRGHAKVHGHLPPGPRPLPLLGNLLQMDRGGFRKSFIQLQEKHGDVFTVYFGPRPVVMLCGTQTIREALVDHAEAFSGRGIIAVLQPIMQEYGVSFVNEERWKILRRLFVATMRDFGIGKQSVEDQIKEEAKCLVEELKNHQGVSLDPTFLFQCVTGNIICSIVFGERFDYRDRQFLRLLDLLYRTFSLISSFSSQMFEVYSDFLKYFPGVHREIYKNLKEVLDYIDHSVENHRATLDPNAPRDFIDTFLLHMEKEKLNHYTEFHHWNLMISVLFLFLAGTESTSNTLCYGFLLMLKYPHVAEKVQKEIDQVIGSQRVPTLDDRSKMPYTEAVIHEIQRFSDVSPMGLPCRITKDTLFRGYLLPKNTEVYFILSSALHDPQYFEQPDTFNPEHFLDANGALKKCEAFMPFSIGKRMCLGEGIARSELFLFFTTILQNYSVSSPVDPNTIDMTPKESGLAKVAPVYKICFVAR</sequence>
<gene>
    <name type="primary">Cyp2b3</name>
    <name type="synonym">Cyp2b-3</name>
</gene>
<keyword id="KW-0256">Endoplasmic reticulum</keyword>
<keyword id="KW-0349">Heme</keyword>
<keyword id="KW-0408">Iron</keyword>
<keyword id="KW-0472">Membrane</keyword>
<keyword id="KW-0479">Metal-binding</keyword>
<keyword id="KW-0492">Microsome</keyword>
<keyword id="KW-0503">Monooxygenase</keyword>
<keyword id="KW-0560">Oxidoreductase</keyword>
<keyword id="KW-1185">Reference proteome</keyword>
<evidence type="ECO:0000250" key="1"/>
<evidence type="ECO:0000305" key="2"/>
<organism>
    <name type="scientific">Rattus norvegicus</name>
    <name type="common">Rat</name>
    <dbReference type="NCBI Taxonomy" id="10116"/>
    <lineage>
        <taxon>Eukaryota</taxon>
        <taxon>Metazoa</taxon>
        <taxon>Chordata</taxon>
        <taxon>Craniata</taxon>
        <taxon>Vertebrata</taxon>
        <taxon>Euteleostomi</taxon>
        <taxon>Mammalia</taxon>
        <taxon>Eutheria</taxon>
        <taxon>Euarchontoglires</taxon>
        <taxon>Glires</taxon>
        <taxon>Rodentia</taxon>
        <taxon>Myomorpha</taxon>
        <taxon>Muroidea</taxon>
        <taxon>Muridae</taxon>
        <taxon>Murinae</taxon>
        <taxon>Rattus</taxon>
    </lineage>
</organism>
<reference key="1">
    <citation type="journal article" date="1988" name="DNA">
        <title>A constitutive member of the rat cytochrome P450IIB subfamily: full-length coding sequence of the P450IIB3 cDNA.</title>
        <authorList>
            <person name="Labbe D."/>
            <person name="Jean A."/>
            <person name="Anderson A."/>
        </authorList>
    </citation>
    <scope>NUCLEOTIDE SEQUENCE [MRNA]</scope>
</reference>
<reference key="2">
    <citation type="journal article" date="2004" name="Genome Res.">
        <title>The status, quality, and expansion of the NIH full-length cDNA project: the Mammalian Gene Collection (MGC).</title>
        <authorList>
            <consortium name="The MGC Project Team"/>
        </authorList>
    </citation>
    <scope>NUCLEOTIDE SEQUENCE [LARGE SCALE MRNA]</scope>
    <source>
        <tissue>Liver</tissue>
    </source>
</reference>
<reference key="3">
    <citation type="journal article" date="1986" name="DNA">
        <title>cDNA clones for liver cytochrome P-450s from individual aroclor-treated rats: constitutive expression of a new P-450 gene related to phenobarbital-inducible forms.</title>
        <authorList>
            <person name="Affolter M."/>
            <person name="Labbe D."/>
            <person name="Jean A."/>
            <person name="Raymond M."/>
            <person name="Noel D."/>
            <person name="Labelle Y."/>
            <person name="Parent-Vaugeois C."/>
            <person name="Lambert M."/>
            <person name="Bojanowski R."/>
            <person name="Anderson A."/>
        </authorList>
    </citation>
    <scope>NUCLEOTIDE SEQUENCE [MRNA] OF 295-491</scope>
</reference>
<dbReference type="EC" id="1.14.14.1"/>
<dbReference type="EMBL" id="M20406">
    <property type="protein sequence ID" value="AAA41006.1"/>
    <property type="molecule type" value="mRNA"/>
</dbReference>
<dbReference type="EMBL" id="BC088103">
    <property type="protein sequence ID" value="AAH88103.1"/>
    <property type="molecule type" value="mRNA"/>
</dbReference>
<dbReference type="EMBL" id="BC105823">
    <property type="protein sequence ID" value="AAI05824.1"/>
    <property type="molecule type" value="mRNA"/>
</dbReference>
<dbReference type="EMBL" id="BC127479">
    <property type="protein sequence ID" value="AAI27480.1"/>
    <property type="molecule type" value="mRNA"/>
</dbReference>
<dbReference type="EMBL" id="M19973">
    <property type="protein sequence ID" value="AAA41048.1"/>
    <property type="molecule type" value="mRNA"/>
</dbReference>
<dbReference type="PIR" id="A29818">
    <property type="entry name" value="A29818"/>
</dbReference>
<dbReference type="RefSeq" id="NP_775416.1">
    <property type="nucleotide sequence ID" value="NM_173294.3"/>
</dbReference>
<dbReference type="SMR" id="P13107"/>
<dbReference type="FunCoup" id="P13107">
    <property type="interactions" value="51"/>
</dbReference>
<dbReference type="IntAct" id="P13107">
    <property type="interactions" value="1"/>
</dbReference>
<dbReference type="STRING" id="10116.ENSRNOP00000030069"/>
<dbReference type="iPTMnet" id="P13107"/>
<dbReference type="PhosphoSitePlus" id="P13107"/>
<dbReference type="PaxDb" id="10116-ENSRNOP00000030069"/>
<dbReference type="Ensembl" id="ENSRNOT00000034845.6">
    <property type="protein sequence ID" value="ENSRNOP00000030069.5"/>
    <property type="gene ID" value="ENSRNOG00000033164.6"/>
</dbReference>
<dbReference type="GeneID" id="286953"/>
<dbReference type="KEGG" id="rno:286953"/>
<dbReference type="AGR" id="RGD:628627"/>
<dbReference type="CTD" id="286953"/>
<dbReference type="RGD" id="628627">
    <property type="gene designation" value="Cyp2b3"/>
</dbReference>
<dbReference type="eggNOG" id="KOG0156">
    <property type="taxonomic scope" value="Eukaryota"/>
</dbReference>
<dbReference type="GeneTree" id="ENSGT00940000161658"/>
<dbReference type="InParanoid" id="P13107"/>
<dbReference type="OMA" id="AIMVKYP"/>
<dbReference type="OrthoDB" id="1055148at2759"/>
<dbReference type="PhylomeDB" id="P13107"/>
<dbReference type="PRO" id="PR:P13107"/>
<dbReference type="Proteomes" id="UP000002494">
    <property type="component" value="Chromosome 1"/>
</dbReference>
<dbReference type="Bgee" id="ENSRNOG00000033164">
    <property type="expression patterns" value="Expressed in liver and 11 other cell types or tissues"/>
</dbReference>
<dbReference type="GO" id="GO:0005737">
    <property type="term" value="C:cytoplasm"/>
    <property type="evidence" value="ECO:0000318"/>
    <property type="project" value="GO_Central"/>
</dbReference>
<dbReference type="GO" id="GO:0005789">
    <property type="term" value="C:endoplasmic reticulum membrane"/>
    <property type="evidence" value="ECO:0007669"/>
    <property type="project" value="UniProtKB-SubCell"/>
</dbReference>
<dbReference type="GO" id="GO:0043231">
    <property type="term" value="C:intracellular membrane-bounded organelle"/>
    <property type="evidence" value="ECO:0000318"/>
    <property type="project" value="GO_Central"/>
</dbReference>
<dbReference type="GO" id="GO:0062188">
    <property type="term" value="F:anandamide 11,12 epoxidase activity"/>
    <property type="evidence" value="ECO:0000266"/>
    <property type="project" value="RGD"/>
</dbReference>
<dbReference type="GO" id="GO:0062189">
    <property type="term" value="F:anandamide 14,15 epoxidase activity"/>
    <property type="evidence" value="ECO:0000266"/>
    <property type="project" value="RGD"/>
</dbReference>
<dbReference type="GO" id="GO:0062187">
    <property type="term" value="F:anandamide 8,9 epoxidase activity"/>
    <property type="evidence" value="ECO:0000266"/>
    <property type="project" value="RGD"/>
</dbReference>
<dbReference type="GO" id="GO:0008392">
    <property type="term" value="F:arachidonate epoxygenase activity"/>
    <property type="evidence" value="ECO:0000318"/>
    <property type="project" value="GO_Central"/>
</dbReference>
<dbReference type="GO" id="GO:0101021">
    <property type="term" value="F:estrogen 2-hydroxylase activity"/>
    <property type="evidence" value="ECO:0000266"/>
    <property type="project" value="RGD"/>
</dbReference>
<dbReference type="GO" id="GO:0020037">
    <property type="term" value="F:heme binding"/>
    <property type="evidence" value="ECO:0000266"/>
    <property type="project" value="RGD"/>
</dbReference>
<dbReference type="GO" id="GO:0005506">
    <property type="term" value="F:iron ion binding"/>
    <property type="evidence" value="ECO:0007669"/>
    <property type="project" value="InterPro"/>
</dbReference>
<dbReference type="GO" id="GO:0004497">
    <property type="term" value="F:monooxygenase activity"/>
    <property type="evidence" value="ECO:0000266"/>
    <property type="project" value="RGD"/>
</dbReference>
<dbReference type="GO" id="GO:0016712">
    <property type="term" value="F:oxidoreductase activity, acting on paired donors, with incorporation or reduction of molecular oxygen, reduced flavin or flavoprotein as one donor, and incorporation of one atom of oxygen"/>
    <property type="evidence" value="ECO:0000318"/>
    <property type="project" value="GO_Central"/>
</dbReference>
<dbReference type="GO" id="GO:0008390">
    <property type="term" value="F:testosterone 16-alpha-hydroxylase activity"/>
    <property type="evidence" value="ECO:0000266"/>
    <property type="project" value="RGD"/>
</dbReference>
<dbReference type="GO" id="GO:0062184">
    <property type="term" value="F:testosterone 16-beta-hydroxylase activity"/>
    <property type="evidence" value="ECO:0000266"/>
    <property type="project" value="RGD"/>
</dbReference>
<dbReference type="GO" id="GO:0019373">
    <property type="term" value="P:epoxygenase P450 pathway"/>
    <property type="evidence" value="ECO:0000318"/>
    <property type="project" value="GO_Central"/>
</dbReference>
<dbReference type="GO" id="GO:0042180">
    <property type="term" value="P:ketone metabolic process"/>
    <property type="evidence" value="ECO:0000266"/>
    <property type="project" value="RGD"/>
</dbReference>
<dbReference type="GO" id="GO:1904010">
    <property type="term" value="P:response to Aroclor 1254"/>
    <property type="evidence" value="ECO:0000270"/>
    <property type="project" value="RGD"/>
</dbReference>
<dbReference type="GO" id="GO:0009617">
    <property type="term" value="P:response to bacterium"/>
    <property type="evidence" value="ECO:0000266"/>
    <property type="project" value="RGD"/>
</dbReference>
<dbReference type="GO" id="GO:0008202">
    <property type="term" value="P:steroid metabolic process"/>
    <property type="evidence" value="ECO:0000266"/>
    <property type="project" value="RGD"/>
</dbReference>
<dbReference type="GO" id="GO:0042178">
    <property type="term" value="P:xenobiotic catabolic process"/>
    <property type="evidence" value="ECO:0000266"/>
    <property type="project" value="RGD"/>
</dbReference>
<dbReference type="GO" id="GO:0006805">
    <property type="term" value="P:xenobiotic metabolic process"/>
    <property type="evidence" value="ECO:0000266"/>
    <property type="project" value="RGD"/>
</dbReference>
<dbReference type="CDD" id="cd20672">
    <property type="entry name" value="CYP2B"/>
    <property type="match status" value="1"/>
</dbReference>
<dbReference type="FunFam" id="1.10.630.10:FF:000001">
    <property type="entry name" value="Cytochrome P450, family 2"/>
    <property type="match status" value="1"/>
</dbReference>
<dbReference type="Gene3D" id="1.10.630.10">
    <property type="entry name" value="Cytochrome P450"/>
    <property type="match status" value="1"/>
</dbReference>
<dbReference type="InterPro" id="IPR001128">
    <property type="entry name" value="Cyt_P450"/>
</dbReference>
<dbReference type="InterPro" id="IPR017972">
    <property type="entry name" value="Cyt_P450_CS"/>
</dbReference>
<dbReference type="InterPro" id="IPR002401">
    <property type="entry name" value="Cyt_P450_E_grp-I"/>
</dbReference>
<dbReference type="InterPro" id="IPR008068">
    <property type="entry name" value="Cyt_P450_E_grp-I_CYP2B-like"/>
</dbReference>
<dbReference type="InterPro" id="IPR036396">
    <property type="entry name" value="Cyt_P450_sf"/>
</dbReference>
<dbReference type="InterPro" id="IPR050182">
    <property type="entry name" value="Cytochrome_P450_fam2"/>
</dbReference>
<dbReference type="PANTHER" id="PTHR24300:SF406">
    <property type="entry name" value="CYTOCHROME P450 2B6"/>
    <property type="match status" value="1"/>
</dbReference>
<dbReference type="PANTHER" id="PTHR24300">
    <property type="entry name" value="CYTOCHROME P450 508A4-RELATED"/>
    <property type="match status" value="1"/>
</dbReference>
<dbReference type="Pfam" id="PF00067">
    <property type="entry name" value="p450"/>
    <property type="match status" value="1"/>
</dbReference>
<dbReference type="PRINTS" id="PR00463">
    <property type="entry name" value="EP450I"/>
</dbReference>
<dbReference type="PRINTS" id="PR01685">
    <property type="entry name" value="EP450ICYP2B"/>
</dbReference>
<dbReference type="PRINTS" id="PR00385">
    <property type="entry name" value="P450"/>
</dbReference>
<dbReference type="SUPFAM" id="SSF48264">
    <property type="entry name" value="Cytochrome P450"/>
    <property type="match status" value="1"/>
</dbReference>
<dbReference type="PROSITE" id="PS00086">
    <property type="entry name" value="CYTOCHROME_P450"/>
    <property type="match status" value="1"/>
</dbReference>
<protein>
    <recommendedName>
        <fullName>Cytochrome P450 2B3</fullName>
        <ecNumber>1.14.14.1</ecNumber>
    </recommendedName>
    <alternativeName>
        <fullName>CYPIIB3</fullName>
    </alternativeName>
</protein>